<organism>
    <name type="scientific">Saccharomyces cerevisiae (strain AWRI1631)</name>
    <name type="common">Baker's yeast</name>
    <dbReference type="NCBI Taxonomy" id="545124"/>
    <lineage>
        <taxon>Eukaryota</taxon>
        <taxon>Fungi</taxon>
        <taxon>Dikarya</taxon>
        <taxon>Ascomycota</taxon>
        <taxon>Saccharomycotina</taxon>
        <taxon>Saccharomycetes</taxon>
        <taxon>Saccharomycetales</taxon>
        <taxon>Saccharomycetaceae</taxon>
        <taxon>Saccharomyces</taxon>
    </lineage>
</organism>
<accession>B5VGN1</accession>
<gene>
    <name type="primary">ATP22</name>
    <name type="ORF">AWRI1631_45660</name>
</gene>
<reference key="1">
    <citation type="journal article" date="2008" name="FEMS Yeast Res.">
        <title>Comparative genome analysis of a Saccharomyces cerevisiae wine strain.</title>
        <authorList>
            <person name="Borneman A.R."/>
            <person name="Forgan A.H."/>
            <person name="Pretorius I.S."/>
            <person name="Chambers P.J."/>
        </authorList>
    </citation>
    <scope>NUCLEOTIDE SEQUENCE [LARGE SCALE GENOMIC DNA]</scope>
    <source>
        <strain>AWRI1631</strain>
    </source>
</reference>
<name>ATP22_YEAS6</name>
<proteinExistence type="inferred from homology"/>
<feature type="transit peptide" description="Mitochondrion" evidence="2">
    <location>
        <begin position="1"/>
        <end position="56"/>
    </location>
</feature>
<feature type="chain" id="PRO_0000392080" description="Mitochondrial translation factor ATP22">
    <location>
        <begin position="57"/>
        <end position="684"/>
    </location>
</feature>
<dbReference type="EMBL" id="ABSV01000535">
    <property type="protein sequence ID" value="EDZ72912.1"/>
    <property type="molecule type" value="Genomic_DNA"/>
</dbReference>
<dbReference type="OrthoDB" id="35825at4893"/>
<dbReference type="Proteomes" id="UP000008988">
    <property type="component" value="Unassembled WGS sequence"/>
</dbReference>
<dbReference type="GO" id="GO:0005743">
    <property type="term" value="C:mitochondrial inner membrane"/>
    <property type="evidence" value="ECO:0007669"/>
    <property type="project" value="UniProtKB-SubCell"/>
</dbReference>
<dbReference type="GO" id="GO:0045182">
    <property type="term" value="F:translation regulator activity"/>
    <property type="evidence" value="ECO:0007669"/>
    <property type="project" value="InterPro"/>
</dbReference>
<dbReference type="InterPro" id="IPR017207">
    <property type="entry name" value="Atp22"/>
</dbReference>
<dbReference type="PIRSF" id="PIRSF037437">
    <property type="entry name" value="Atp22"/>
    <property type="match status" value="1"/>
</dbReference>
<comment type="function">
    <text evidence="1">Translation factor specific for subunit 6 of the mitochondrial ATPase. Required for assembly of the CF(0) component of the ATPase (By similarity).</text>
</comment>
<comment type="subcellular location">
    <subcellularLocation>
        <location evidence="1">Mitochondrion inner membrane</location>
        <topology evidence="1">Peripheral membrane protein</topology>
        <orientation evidence="1">Matrix side</orientation>
    </subcellularLocation>
</comment>
<comment type="similarity">
    <text evidence="3">Belongs to the ATP22 family.</text>
</comment>
<protein>
    <recommendedName>
        <fullName>Mitochondrial translation factor ATP22</fullName>
    </recommendedName>
</protein>
<sequence>MLKCICRVYSQPLAQMVTSPLFKHMGSAGTYTILPITNLRHLSTKNCPLKIKSNRSEPLQFGDFERQVPCSRKSGSSKNVQKRLYELRQLKTVLSETFGVTEYASFFESLRNALHINNCSENEKKKLLYDIILHQHELYPEVARKIGFYLPGEVHRWFWYRIPKSESFNHYLFLLKSDVLLFTSNYCTRFTNRLIKGTEMERQLATFQIFLHDETNIKFIMEKVLKLHTFDSLIALVNGLVKAKNFRFIKVFIQALLQKLEQHCYSGKDGAKQKNLRYVKFNNTLLYYLLKSGNVELFIKTFQEELKFIVSSGLLNHIDGNEHILNFPIHHYLNLLRISNRQEELFNVISCLQSSPLMKYKLFKEFLMGELIASFQAFRDPKLVCKYLLSSYSSKASANILNALGIWGWLYHSKSTTLTAPTLARELKNKNNILPNTMRIGSPVTVPILTELYRSLLSSSSVSLESGQFKNCLLDLYYKYKSFLSEEAHKYRYWRNDTGILNVFLNYIRFQAREPRLAYNVLLDFYSQPFAKKVVLTTTLCPFSIVAYKNHTLTQAELSELLQVMHKNGVPLTFKFCSAMVMHYVKMRDEKGARSWYNKILFGGFEIRHMALIQIIKDQGWPFPKNFDETLLTELVENNNIKEPTDSTLFTDEDMFEEDGKPRFNDDDVNKCTNIIRETLKSLN</sequence>
<evidence type="ECO:0000250" key="1"/>
<evidence type="ECO:0000255" key="2"/>
<evidence type="ECO:0000305" key="3"/>
<keyword id="KW-0472">Membrane</keyword>
<keyword id="KW-0496">Mitochondrion</keyword>
<keyword id="KW-0999">Mitochondrion inner membrane</keyword>
<keyword id="KW-0809">Transit peptide</keyword>
<keyword id="KW-0810">Translation regulation</keyword>